<accession>A8GHR1</accession>
<reference key="1">
    <citation type="submission" date="2007-09" db="EMBL/GenBank/DDBJ databases">
        <title>Complete sequence of chromosome of Serratia proteamaculans 568.</title>
        <authorList>
            <consortium name="US DOE Joint Genome Institute"/>
            <person name="Copeland A."/>
            <person name="Lucas S."/>
            <person name="Lapidus A."/>
            <person name="Barry K."/>
            <person name="Glavina del Rio T."/>
            <person name="Dalin E."/>
            <person name="Tice H."/>
            <person name="Pitluck S."/>
            <person name="Chain P."/>
            <person name="Malfatti S."/>
            <person name="Shin M."/>
            <person name="Vergez L."/>
            <person name="Schmutz J."/>
            <person name="Larimer F."/>
            <person name="Land M."/>
            <person name="Hauser L."/>
            <person name="Kyrpides N."/>
            <person name="Kim E."/>
            <person name="Taghavi S."/>
            <person name="Newman L."/>
            <person name="Vangronsveld J."/>
            <person name="van der Lelie D."/>
            <person name="Richardson P."/>
        </authorList>
    </citation>
    <scope>NUCLEOTIDE SEQUENCE [LARGE SCALE GENOMIC DNA]</scope>
    <source>
        <strain>568</strain>
    </source>
</reference>
<gene>
    <name evidence="1" type="primary">mdtD</name>
    <name type="ordered locus">Spro_3555</name>
</gene>
<feature type="chain" id="PRO_0000365290" description="Putative multidrug resistance protein MdtD">
    <location>
        <begin position="1"/>
        <end position="477"/>
    </location>
</feature>
<feature type="transmembrane region" description="Helical" evidence="1">
    <location>
        <begin position="13"/>
        <end position="33"/>
    </location>
</feature>
<feature type="transmembrane region" description="Helical" evidence="1">
    <location>
        <begin position="50"/>
        <end position="70"/>
    </location>
</feature>
<feature type="transmembrane region" description="Helical" evidence="1">
    <location>
        <begin position="73"/>
        <end position="93"/>
    </location>
</feature>
<feature type="transmembrane region" description="Helical" evidence="1">
    <location>
        <begin position="107"/>
        <end position="127"/>
    </location>
</feature>
<feature type="transmembrane region" description="Helical" evidence="1">
    <location>
        <begin position="139"/>
        <end position="159"/>
    </location>
</feature>
<feature type="transmembrane region" description="Helical" evidence="1">
    <location>
        <begin position="166"/>
        <end position="186"/>
    </location>
</feature>
<feature type="transmembrane region" description="Helical" evidence="1">
    <location>
        <begin position="196"/>
        <end position="216"/>
    </location>
</feature>
<feature type="transmembrane region" description="Helical" evidence="1">
    <location>
        <begin position="220"/>
        <end position="240"/>
    </location>
</feature>
<feature type="transmembrane region" description="Helical" evidence="1">
    <location>
        <begin position="268"/>
        <end position="288"/>
    </location>
</feature>
<feature type="transmembrane region" description="Helical" evidence="1">
    <location>
        <begin position="291"/>
        <end position="311"/>
    </location>
</feature>
<feature type="transmembrane region" description="Helical" evidence="1">
    <location>
        <begin position="326"/>
        <end position="348"/>
    </location>
</feature>
<feature type="transmembrane region" description="Helical" evidence="1">
    <location>
        <begin position="352"/>
        <end position="374"/>
    </location>
</feature>
<feature type="transmembrane region" description="Helical" evidence="1">
    <location>
        <begin position="394"/>
        <end position="414"/>
    </location>
</feature>
<feature type="transmembrane region" description="Helical" evidence="1">
    <location>
        <begin position="432"/>
        <end position="452"/>
    </location>
</feature>
<keyword id="KW-0997">Cell inner membrane</keyword>
<keyword id="KW-1003">Cell membrane</keyword>
<keyword id="KW-0472">Membrane</keyword>
<keyword id="KW-0812">Transmembrane</keyword>
<keyword id="KW-1133">Transmembrane helix</keyword>
<keyword id="KW-0813">Transport</keyword>
<protein>
    <recommendedName>
        <fullName evidence="1">Putative multidrug resistance protein MdtD</fullName>
    </recommendedName>
</protein>
<sequence>MLIKHTASVQWQLWIVAFGFFMQTLDTTIVNTALPSMAVSLGENPLRMQSVIVSYVLTVAVMLPASGWLADRVGVQRVFFSAIVLFTLGSILCARSETLNELIASRVVQGIGGAMMVPVGRLTVMKIVPREQYMAAMTFVTLPGQIGPLMGPALGGFLVQYASWHWIFLINIPVGIAGAIATLLLMPNYRMQTRRFDISGFILLAVGMATLTLALDGHKGMGLSATAIAGLVVAGVAALAGYWWHAHGNSRALFSLRLFKTRTYKVGLTASLLGRIGSGMLPFMTPLFMQVGMGFSPFHAGLMMIPMIIGSMGMKRIVVRVVNRFGYRNVLVAATLMLALISLSFPLVAMLGWIWLLPVVLFFQGMVNSLRFSAMNTLTLKDLPDRLASSGNSLLSMVMQLSMSLGVSIAGILIGSFAHHQVVTDSPAIHSAFIYSYCCMALIIALPALAFARVPADTTTNRTLTKEPGTGSTRLQQ</sequence>
<comment type="subcellular location">
    <subcellularLocation>
        <location evidence="1">Cell inner membrane</location>
        <topology evidence="1">Multi-pass membrane protein</topology>
    </subcellularLocation>
</comment>
<comment type="similarity">
    <text evidence="1">Belongs to the major facilitator superfamily. TCR/Tet family.</text>
</comment>
<organism>
    <name type="scientific">Serratia proteamaculans (strain 568)</name>
    <dbReference type="NCBI Taxonomy" id="399741"/>
    <lineage>
        <taxon>Bacteria</taxon>
        <taxon>Pseudomonadati</taxon>
        <taxon>Pseudomonadota</taxon>
        <taxon>Gammaproteobacteria</taxon>
        <taxon>Enterobacterales</taxon>
        <taxon>Yersiniaceae</taxon>
        <taxon>Serratia</taxon>
    </lineage>
</organism>
<evidence type="ECO:0000255" key="1">
    <source>
        <dbReference type="HAMAP-Rule" id="MF_01577"/>
    </source>
</evidence>
<name>MDTD_SERP5</name>
<proteinExistence type="inferred from homology"/>
<dbReference type="EMBL" id="CP000826">
    <property type="protein sequence ID" value="ABV42651.1"/>
    <property type="molecule type" value="Genomic_DNA"/>
</dbReference>
<dbReference type="SMR" id="A8GHR1"/>
<dbReference type="STRING" id="399741.Spro_3555"/>
<dbReference type="KEGG" id="spe:Spro_3555"/>
<dbReference type="eggNOG" id="COG2814">
    <property type="taxonomic scope" value="Bacteria"/>
</dbReference>
<dbReference type="HOGENOM" id="CLU_000960_28_0_6"/>
<dbReference type="OrthoDB" id="9812221at2"/>
<dbReference type="GO" id="GO:0005886">
    <property type="term" value="C:plasma membrane"/>
    <property type="evidence" value="ECO:0007669"/>
    <property type="project" value="UniProtKB-SubCell"/>
</dbReference>
<dbReference type="GO" id="GO:0022857">
    <property type="term" value="F:transmembrane transporter activity"/>
    <property type="evidence" value="ECO:0007669"/>
    <property type="project" value="UniProtKB-UniRule"/>
</dbReference>
<dbReference type="CDD" id="cd17503">
    <property type="entry name" value="MFS_LmrB_MDR_like"/>
    <property type="match status" value="1"/>
</dbReference>
<dbReference type="FunFam" id="1.20.1250.20:FF:000021">
    <property type="entry name" value="Putative multidrug resistance protein MdtD"/>
    <property type="match status" value="1"/>
</dbReference>
<dbReference type="FunFam" id="1.20.1720.10:FF:000001">
    <property type="entry name" value="Putative multidrug resistance protein MdtD"/>
    <property type="match status" value="1"/>
</dbReference>
<dbReference type="Gene3D" id="1.20.1250.20">
    <property type="entry name" value="MFS general substrate transporter like domains"/>
    <property type="match status" value="1"/>
</dbReference>
<dbReference type="Gene3D" id="1.20.1720.10">
    <property type="entry name" value="Multidrug resistance protein D"/>
    <property type="match status" value="1"/>
</dbReference>
<dbReference type="HAMAP" id="MF_01577">
    <property type="entry name" value="MFS_MdtD"/>
    <property type="match status" value="1"/>
</dbReference>
<dbReference type="InterPro" id="IPR004638">
    <property type="entry name" value="EmrB-like"/>
</dbReference>
<dbReference type="InterPro" id="IPR011701">
    <property type="entry name" value="MFS"/>
</dbReference>
<dbReference type="InterPro" id="IPR020846">
    <property type="entry name" value="MFS_dom"/>
</dbReference>
<dbReference type="InterPro" id="IPR036259">
    <property type="entry name" value="MFS_trans_sf"/>
</dbReference>
<dbReference type="InterPro" id="IPR023721">
    <property type="entry name" value="Multi-R_MdtD"/>
</dbReference>
<dbReference type="NCBIfam" id="TIGR00711">
    <property type="entry name" value="efflux_EmrB"/>
    <property type="match status" value="1"/>
</dbReference>
<dbReference type="NCBIfam" id="NF007799">
    <property type="entry name" value="PRK10504.1"/>
    <property type="match status" value="1"/>
</dbReference>
<dbReference type="PANTHER" id="PTHR42718:SF46">
    <property type="entry name" value="BLR6921 PROTEIN"/>
    <property type="match status" value="1"/>
</dbReference>
<dbReference type="PANTHER" id="PTHR42718">
    <property type="entry name" value="MAJOR FACILITATOR SUPERFAMILY MULTIDRUG TRANSPORTER MFSC"/>
    <property type="match status" value="1"/>
</dbReference>
<dbReference type="Pfam" id="PF07690">
    <property type="entry name" value="MFS_1"/>
    <property type="match status" value="1"/>
</dbReference>
<dbReference type="PRINTS" id="PR01036">
    <property type="entry name" value="TCRTETB"/>
</dbReference>
<dbReference type="SUPFAM" id="SSF103473">
    <property type="entry name" value="MFS general substrate transporter"/>
    <property type="match status" value="1"/>
</dbReference>
<dbReference type="PROSITE" id="PS50850">
    <property type="entry name" value="MFS"/>
    <property type="match status" value="1"/>
</dbReference>